<reference key="1">
    <citation type="journal article" date="2005" name="Proc. Natl. Acad. Sci. U.S.A.">
        <title>Complete genome sequence of the probiotic lactic acid bacterium Lactobacillus acidophilus NCFM.</title>
        <authorList>
            <person name="Altermann E."/>
            <person name="Russell W.M."/>
            <person name="Azcarate-Peril M.A."/>
            <person name="Barrangou R."/>
            <person name="Buck B.L."/>
            <person name="McAuliffe O."/>
            <person name="Souther N."/>
            <person name="Dobson A."/>
            <person name="Duong T."/>
            <person name="Callanan M."/>
            <person name="Lick S."/>
            <person name="Hamrick A."/>
            <person name="Cano R."/>
            <person name="Klaenhammer T.R."/>
        </authorList>
    </citation>
    <scope>NUCLEOTIDE SEQUENCE [LARGE SCALE GENOMIC DNA]</scope>
    <source>
        <strain>ATCC 700396 / NCK56 / N2 / NCFM</strain>
    </source>
</reference>
<organism>
    <name type="scientific">Lactobacillus acidophilus (strain ATCC 700396 / NCK56 / N2 / NCFM)</name>
    <dbReference type="NCBI Taxonomy" id="272621"/>
    <lineage>
        <taxon>Bacteria</taxon>
        <taxon>Bacillati</taxon>
        <taxon>Bacillota</taxon>
        <taxon>Bacilli</taxon>
        <taxon>Lactobacillales</taxon>
        <taxon>Lactobacillaceae</taxon>
        <taxon>Lactobacillus</taxon>
    </lineage>
</organism>
<feature type="chain" id="PRO_0000095802" description="Translation initiation factor IF-1">
    <location>
        <begin position="1"/>
        <end position="73"/>
    </location>
</feature>
<feature type="domain" description="S1-like" evidence="1">
    <location>
        <begin position="1"/>
        <end position="72"/>
    </location>
</feature>
<protein>
    <recommendedName>
        <fullName evidence="1">Translation initiation factor IF-1</fullName>
    </recommendedName>
</protein>
<keyword id="KW-0963">Cytoplasm</keyword>
<keyword id="KW-0396">Initiation factor</keyword>
<keyword id="KW-0648">Protein biosynthesis</keyword>
<keyword id="KW-1185">Reference proteome</keyword>
<keyword id="KW-0694">RNA-binding</keyword>
<keyword id="KW-0699">rRNA-binding</keyword>
<proteinExistence type="inferred from homology"/>
<dbReference type="EMBL" id="CP000033">
    <property type="protein sequence ID" value="AAV42205.1"/>
    <property type="molecule type" value="Genomic_DNA"/>
</dbReference>
<dbReference type="RefSeq" id="WP_002878178.1">
    <property type="nucleotide sequence ID" value="NC_006814.3"/>
</dbReference>
<dbReference type="RefSeq" id="YP_193236.1">
    <property type="nucleotide sequence ID" value="NC_006814.3"/>
</dbReference>
<dbReference type="SMR" id="Q5FM69"/>
<dbReference type="STRING" id="272621.LBA0313"/>
<dbReference type="GeneID" id="93290579"/>
<dbReference type="KEGG" id="lac:LBA0313"/>
<dbReference type="PATRIC" id="fig|272621.13.peg.299"/>
<dbReference type="eggNOG" id="COG0361">
    <property type="taxonomic scope" value="Bacteria"/>
</dbReference>
<dbReference type="HOGENOM" id="CLU_151267_1_0_9"/>
<dbReference type="OrthoDB" id="9803250at2"/>
<dbReference type="BioCyc" id="LACI272621:G1G49-307-MONOMER"/>
<dbReference type="PRO" id="PR:Q5FM69"/>
<dbReference type="Proteomes" id="UP000006381">
    <property type="component" value="Chromosome"/>
</dbReference>
<dbReference type="GO" id="GO:0005829">
    <property type="term" value="C:cytosol"/>
    <property type="evidence" value="ECO:0007669"/>
    <property type="project" value="TreeGrafter"/>
</dbReference>
<dbReference type="GO" id="GO:0043022">
    <property type="term" value="F:ribosome binding"/>
    <property type="evidence" value="ECO:0007669"/>
    <property type="project" value="UniProtKB-UniRule"/>
</dbReference>
<dbReference type="GO" id="GO:0019843">
    <property type="term" value="F:rRNA binding"/>
    <property type="evidence" value="ECO:0007669"/>
    <property type="project" value="UniProtKB-UniRule"/>
</dbReference>
<dbReference type="GO" id="GO:0003743">
    <property type="term" value="F:translation initiation factor activity"/>
    <property type="evidence" value="ECO:0007669"/>
    <property type="project" value="UniProtKB-UniRule"/>
</dbReference>
<dbReference type="CDD" id="cd04451">
    <property type="entry name" value="S1_IF1"/>
    <property type="match status" value="1"/>
</dbReference>
<dbReference type="FunFam" id="2.40.50.140:FF:000002">
    <property type="entry name" value="Translation initiation factor IF-1"/>
    <property type="match status" value="1"/>
</dbReference>
<dbReference type="Gene3D" id="2.40.50.140">
    <property type="entry name" value="Nucleic acid-binding proteins"/>
    <property type="match status" value="1"/>
</dbReference>
<dbReference type="HAMAP" id="MF_00075">
    <property type="entry name" value="IF_1"/>
    <property type="match status" value="1"/>
</dbReference>
<dbReference type="InterPro" id="IPR012340">
    <property type="entry name" value="NA-bd_OB-fold"/>
</dbReference>
<dbReference type="InterPro" id="IPR006196">
    <property type="entry name" value="RNA-binding_domain_S1_IF1"/>
</dbReference>
<dbReference type="InterPro" id="IPR003029">
    <property type="entry name" value="S1_domain"/>
</dbReference>
<dbReference type="InterPro" id="IPR004368">
    <property type="entry name" value="TIF_IF1"/>
</dbReference>
<dbReference type="NCBIfam" id="TIGR00008">
    <property type="entry name" value="infA"/>
    <property type="match status" value="1"/>
</dbReference>
<dbReference type="PANTHER" id="PTHR33370">
    <property type="entry name" value="TRANSLATION INITIATION FACTOR IF-1, CHLOROPLASTIC"/>
    <property type="match status" value="1"/>
</dbReference>
<dbReference type="PANTHER" id="PTHR33370:SF1">
    <property type="entry name" value="TRANSLATION INITIATION FACTOR IF-1, CHLOROPLASTIC"/>
    <property type="match status" value="1"/>
</dbReference>
<dbReference type="Pfam" id="PF01176">
    <property type="entry name" value="eIF-1a"/>
    <property type="match status" value="1"/>
</dbReference>
<dbReference type="SMART" id="SM00316">
    <property type="entry name" value="S1"/>
    <property type="match status" value="1"/>
</dbReference>
<dbReference type="SUPFAM" id="SSF50249">
    <property type="entry name" value="Nucleic acid-binding proteins"/>
    <property type="match status" value="1"/>
</dbReference>
<dbReference type="PROSITE" id="PS50832">
    <property type="entry name" value="S1_IF1_TYPE"/>
    <property type="match status" value="1"/>
</dbReference>
<name>IF1_LACAC</name>
<comment type="function">
    <text evidence="1">One of the essential components for the initiation of protein synthesis. Stabilizes the binding of IF-2 and IF-3 on the 30S subunit to which N-formylmethionyl-tRNA(fMet) subsequently binds. Helps modulate mRNA selection, yielding the 30S pre-initiation complex (PIC). Upon addition of the 50S ribosomal subunit IF-1, IF-2 and IF-3 are released leaving the mature 70S translation initiation complex.</text>
</comment>
<comment type="subunit">
    <text evidence="1">Component of the 30S ribosomal translation pre-initiation complex which assembles on the 30S ribosome in the order IF-2 and IF-3, IF-1 and N-formylmethionyl-tRNA(fMet); mRNA recruitment can occur at any time during PIC assembly.</text>
</comment>
<comment type="subcellular location">
    <subcellularLocation>
        <location evidence="1">Cytoplasm</location>
    </subcellularLocation>
</comment>
<comment type="similarity">
    <text evidence="1">Belongs to the IF-1 family.</text>
</comment>
<sequence>MAKDDVIEVEGKVVDTLPNAMFKVELENGATILAHVSGKIRMHYIRILPGDRVTVELSPYDLTKGRITYRFIK</sequence>
<evidence type="ECO:0000255" key="1">
    <source>
        <dbReference type="HAMAP-Rule" id="MF_00075"/>
    </source>
</evidence>
<gene>
    <name evidence="1" type="primary">infA</name>
    <name type="ordered locus">LBA0313</name>
</gene>
<accession>Q5FM69</accession>